<comment type="function">
    <text evidence="3 4 5">Required for the expression of gene products mediating border cell migration (PubMed:10949024, PubMed:1459454, PubMed:23305818). Among the DNA sequences that this protein binds with high affinity is a conserved site within the promoter of its gene (PubMed:1459454).</text>
</comment>
<comment type="subunit">
    <text evidence="4 5">Binds DNA as a dimer and can form stable heterodimers (PubMed:1459454). Interacts with trbl (PubMed:23305818).</text>
</comment>
<comment type="interaction">
    <interactant intactId="EBI-158748">
        <id>Q02637</id>
    </interactant>
    <interactant intactId="EBI-15108419">
        <id>Q9NIR3</id>
        <label>crc</label>
    </interactant>
    <organismsDiffer>false</organismsDiffer>
    <experiments>2</experiments>
</comment>
<comment type="subcellular location">
    <subcellularLocation>
        <location evidence="4">Nucleus</location>
    </subcellularLocation>
</comment>
<comment type="developmental stage">
    <text evidence="3">At stage 9 detected in centrally located anterior polar cells, and in border cells before and as they migrate (at protein level). At stage 10, detected in centripetal cells and levels decrease in border cells as they finish migrating (at protein level).</text>
</comment>
<comment type="PTM">
    <text evidence="3">Ubiquitination/deubiquitination regulates border cell migration. Ubiquitination is stimulated by trbl, which leads to proteasomal degradation and inhibits border cell migration. Deubiquitination by Usp47, leads to its stabilization and promotes border cell migration.</text>
</comment>
<comment type="similarity">
    <text evidence="6">Belongs to the bZIP family. C/EBP subfamily.</text>
</comment>
<name>CEBP_DROME</name>
<reference key="1">
    <citation type="journal article" date="1992" name="Cell">
        <title>Slow border cells, a locus required for a developmentally regulated cell migration during oogenesis, encodes Drosophila C/EBP.</title>
        <authorList>
            <person name="Montell D.J."/>
            <person name="Rorth P."/>
            <person name="Spradling A.C."/>
        </authorList>
    </citation>
    <scope>NUCLEOTIDE SEQUENCE [GENOMIC DNA]</scope>
    <source>
        <strain>Canton-S</strain>
    </source>
</reference>
<reference key="2">
    <citation type="journal article" date="2000" name="Science">
        <title>The genome sequence of Drosophila melanogaster.</title>
        <authorList>
            <person name="Adams M.D."/>
            <person name="Celniker S.E."/>
            <person name="Holt R.A."/>
            <person name="Evans C.A."/>
            <person name="Gocayne J.D."/>
            <person name="Amanatides P.G."/>
            <person name="Scherer S.E."/>
            <person name="Li P.W."/>
            <person name="Hoskins R.A."/>
            <person name="Galle R.F."/>
            <person name="George R.A."/>
            <person name="Lewis S.E."/>
            <person name="Richards S."/>
            <person name="Ashburner M."/>
            <person name="Henderson S.N."/>
            <person name="Sutton G.G."/>
            <person name="Wortman J.R."/>
            <person name="Yandell M.D."/>
            <person name="Zhang Q."/>
            <person name="Chen L.X."/>
            <person name="Brandon R.C."/>
            <person name="Rogers Y.-H.C."/>
            <person name="Blazej R.G."/>
            <person name="Champe M."/>
            <person name="Pfeiffer B.D."/>
            <person name="Wan K.H."/>
            <person name="Doyle C."/>
            <person name="Baxter E.G."/>
            <person name="Helt G."/>
            <person name="Nelson C.R."/>
            <person name="Miklos G.L.G."/>
            <person name="Abril J.F."/>
            <person name="Agbayani A."/>
            <person name="An H.-J."/>
            <person name="Andrews-Pfannkoch C."/>
            <person name="Baldwin D."/>
            <person name="Ballew R.M."/>
            <person name="Basu A."/>
            <person name="Baxendale J."/>
            <person name="Bayraktaroglu L."/>
            <person name="Beasley E.M."/>
            <person name="Beeson K.Y."/>
            <person name="Benos P.V."/>
            <person name="Berman B.P."/>
            <person name="Bhandari D."/>
            <person name="Bolshakov S."/>
            <person name="Borkova D."/>
            <person name="Botchan M.R."/>
            <person name="Bouck J."/>
            <person name="Brokstein P."/>
            <person name="Brottier P."/>
            <person name="Burtis K.C."/>
            <person name="Busam D.A."/>
            <person name="Butler H."/>
            <person name="Cadieu E."/>
            <person name="Center A."/>
            <person name="Chandra I."/>
            <person name="Cherry J.M."/>
            <person name="Cawley S."/>
            <person name="Dahlke C."/>
            <person name="Davenport L.B."/>
            <person name="Davies P."/>
            <person name="de Pablos B."/>
            <person name="Delcher A."/>
            <person name="Deng Z."/>
            <person name="Mays A.D."/>
            <person name="Dew I."/>
            <person name="Dietz S.M."/>
            <person name="Dodson K."/>
            <person name="Doup L.E."/>
            <person name="Downes M."/>
            <person name="Dugan-Rocha S."/>
            <person name="Dunkov B.C."/>
            <person name="Dunn P."/>
            <person name="Durbin K.J."/>
            <person name="Evangelista C.C."/>
            <person name="Ferraz C."/>
            <person name="Ferriera S."/>
            <person name="Fleischmann W."/>
            <person name="Fosler C."/>
            <person name="Gabrielian A.E."/>
            <person name="Garg N.S."/>
            <person name="Gelbart W.M."/>
            <person name="Glasser K."/>
            <person name="Glodek A."/>
            <person name="Gong F."/>
            <person name="Gorrell J.H."/>
            <person name="Gu Z."/>
            <person name="Guan P."/>
            <person name="Harris M."/>
            <person name="Harris N.L."/>
            <person name="Harvey D.A."/>
            <person name="Heiman T.J."/>
            <person name="Hernandez J.R."/>
            <person name="Houck J."/>
            <person name="Hostin D."/>
            <person name="Houston K.A."/>
            <person name="Howland T.J."/>
            <person name="Wei M.-H."/>
            <person name="Ibegwam C."/>
            <person name="Jalali M."/>
            <person name="Kalush F."/>
            <person name="Karpen G.H."/>
            <person name="Ke Z."/>
            <person name="Kennison J.A."/>
            <person name="Ketchum K.A."/>
            <person name="Kimmel B.E."/>
            <person name="Kodira C.D."/>
            <person name="Kraft C.L."/>
            <person name="Kravitz S."/>
            <person name="Kulp D."/>
            <person name="Lai Z."/>
            <person name="Lasko P."/>
            <person name="Lei Y."/>
            <person name="Levitsky A.A."/>
            <person name="Li J.H."/>
            <person name="Li Z."/>
            <person name="Liang Y."/>
            <person name="Lin X."/>
            <person name="Liu X."/>
            <person name="Mattei B."/>
            <person name="McIntosh T.C."/>
            <person name="McLeod M.P."/>
            <person name="McPherson D."/>
            <person name="Merkulov G."/>
            <person name="Milshina N.V."/>
            <person name="Mobarry C."/>
            <person name="Morris J."/>
            <person name="Moshrefi A."/>
            <person name="Mount S.M."/>
            <person name="Moy M."/>
            <person name="Murphy B."/>
            <person name="Murphy L."/>
            <person name="Muzny D.M."/>
            <person name="Nelson D.L."/>
            <person name="Nelson D.R."/>
            <person name="Nelson K.A."/>
            <person name="Nixon K."/>
            <person name="Nusskern D.R."/>
            <person name="Pacleb J.M."/>
            <person name="Palazzolo M."/>
            <person name="Pittman G.S."/>
            <person name="Pan S."/>
            <person name="Pollard J."/>
            <person name="Puri V."/>
            <person name="Reese M.G."/>
            <person name="Reinert K."/>
            <person name="Remington K."/>
            <person name="Saunders R.D.C."/>
            <person name="Scheeler F."/>
            <person name="Shen H."/>
            <person name="Shue B.C."/>
            <person name="Siden-Kiamos I."/>
            <person name="Simpson M."/>
            <person name="Skupski M.P."/>
            <person name="Smith T.J."/>
            <person name="Spier E."/>
            <person name="Spradling A.C."/>
            <person name="Stapleton M."/>
            <person name="Strong R."/>
            <person name="Sun E."/>
            <person name="Svirskas R."/>
            <person name="Tector C."/>
            <person name="Turner R."/>
            <person name="Venter E."/>
            <person name="Wang A.H."/>
            <person name="Wang X."/>
            <person name="Wang Z.-Y."/>
            <person name="Wassarman D.A."/>
            <person name="Weinstock G.M."/>
            <person name="Weissenbach J."/>
            <person name="Williams S.M."/>
            <person name="Woodage T."/>
            <person name="Worley K.C."/>
            <person name="Wu D."/>
            <person name="Yang S."/>
            <person name="Yao Q.A."/>
            <person name="Ye J."/>
            <person name="Yeh R.-F."/>
            <person name="Zaveri J.S."/>
            <person name="Zhan M."/>
            <person name="Zhang G."/>
            <person name="Zhao Q."/>
            <person name="Zheng L."/>
            <person name="Zheng X.H."/>
            <person name="Zhong F.N."/>
            <person name="Zhong W."/>
            <person name="Zhou X."/>
            <person name="Zhu S.C."/>
            <person name="Zhu X."/>
            <person name="Smith H.O."/>
            <person name="Gibbs R.A."/>
            <person name="Myers E.W."/>
            <person name="Rubin G.M."/>
            <person name="Venter J.C."/>
        </authorList>
    </citation>
    <scope>NUCLEOTIDE SEQUENCE [LARGE SCALE GENOMIC DNA]</scope>
    <source>
        <strain>Berkeley</strain>
    </source>
</reference>
<reference key="3">
    <citation type="journal article" date="2002" name="Genome Biol.">
        <title>Annotation of the Drosophila melanogaster euchromatic genome: a systematic review.</title>
        <authorList>
            <person name="Misra S."/>
            <person name="Crosby M.A."/>
            <person name="Mungall C.J."/>
            <person name="Matthews B.B."/>
            <person name="Campbell K.S."/>
            <person name="Hradecky P."/>
            <person name="Huang Y."/>
            <person name="Kaminker J.S."/>
            <person name="Millburn G.H."/>
            <person name="Prochnik S.E."/>
            <person name="Smith C.D."/>
            <person name="Tupy J.L."/>
            <person name="Whitfield E.J."/>
            <person name="Bayraktaroglu L."/>
            <person name="Berman B.P."/>
            <person name="Bettencourt B.R."/>
            <person name="Celniker S.E."/>
            <person name="de Grey A.D.N.J."/>
            <person name="Drysdale R.A."/>
            <person name="Harris N.L."/>
            <person name="Richter J."/>
            <person name="Russo S."/>
            <person name="Schroeder A.J."/>
            <person name="Shu S.Q."/>
            <person name="Stapleton M."/>
            <person name="Yamada C."/>
            <person name="Ashburner M."/>
            <person name="Gelbart W.M."/>
            <person name="Rubin G.M."/>
            <person name="Lewis S.E."/>
        </authorList>
    </citation>
    <scope>GENOME REANNOTATION</scope>
    <source>
        <strain>Berkeley</strain>
    </source>
</reference>
<reference key="4">
    <citation type="submission" date="2003-08" db="EMBL/GenBank/DDBJ databases">
        <authorList>
            <person name="Stapleton M."/>
            <person name="Brokstein P."/>
            <person name="Hong L."/>
            <person name="Agbayani A."/>
            <person name="Carlson J.W."/>
            <person name="Champe M."/>
            <person name="Chavez C."/>
            <person name="Dorsett V."/>
            <person name="Dresnek D."/>
            <person name="Farfan D."/>
            <person name="Frise E."/>
            <person name="George R.A."/>
            <person name="Gonzalez M."/>
            <person name="Guarin H."/>
            <person name="Kronmiller B."/>
            <person name="Li P.W."/>
            <person name="Liao G."/>
            <person name="Miranda A."/>
            <person name="Mungall C.J."/>
            <person name="Nunoo J."/>
            <person name="Pacleb J.M."/>
            <person name="Paragas V."/>
            <person name="Park S."/>
            <person name="Patel S."/>
            <person name="Phouanenavong S."/>
            <person name="Wan K.H."/>
            <person name="Yu C."/>
            <person name="Lewis S.E."/>
            <person name="Rubin G.M."/>
            <person name="Celniker S.E."/>
        </authorList>
    </citation>
    <scope>NUCLEOTIDE SEQUENCE [LARGE SCALE MRNA]</scope>
    <source>
        <strain>Berkeley</strain>
        <tissue>Embryo</tissue>
    </source>
</reference>
<reference key="5">
    <citation type="journal article" date="1992" name="Genes Dev.">
        <title>Drosophila C/EBP: a tissue-specific DNA-binding protein required for embryonic development.</title>
        <authorList>
            <person name="Rorth P."/>
            <person name="Montell D.J."/>
        </authorList>
    </citation>
    <scope>FUNCTION</scope>
    <scope>SUBUNIT</scope>
    <scope>SUBCELLULAR LOCATION</scope>
</reference>
<reference key="6">
    <citation type="journal article" date="2000" name="Mol. Cell">
        <title>The level of C/EBP protein is critical for cell migration during Drosophila oogenesis and is tightly controlled by regulated degradation.</title>
        <authorList>
            <person name="Roerth P."/>
            <person name="Szabo K."/>
            <person name="Texido G."/>
        </authorList>
    </citation>
    <scope>FUNCTION</scope>
    <scope>DEVELOPMENTAL STAGE</scope>
    <scope>UBIQUITINATION</scope>
</reference>
<reference key="7">
    <citation type="journal article" date="2013" name="Dev. Biol.">
        <title>The kinase domain of Drosophila Tribbles is required for turnover of fly C/EBP during cell migration.</title>
        <authorList>
            <person name="Masoner V."/>
            <person name="Das R."/>
            <person name="Pence L."/>
            <person name="Anand G."/>
            <person name="LaFerriere H."/>
            <person name="Zars T."/>
            <person name="Bouyain S."/>
            <person name="Dobens L.L."/>
        </authorList>
    </citation>
    <scope>FUNCTION</scope>
    <scope>INTERACTION WITH TRBL</scope>
</reference>
<dbReference type="EMBL" id="L00632">
    <property type="protein sequence ID" value="AAA28415.1"/>
    <property type="molecule type" value="Genomic_DNA"/>
</dbReference>
<dbReference type="EMBL" id="AE013599">
    <property type="protein sequence ID" value="AAF47194.1"/>
    <property type="molecule type" value="Genomic_DNA"/>
</dbReference>
<dbReference type="EMBL" id="BT009992">
    <property type="protein sequence ID" value="AAQ22461.1"/>
    <property type="molecule type" value="mRNA"/>
</dbReference>
<dbReference type="PIR" id="A43481">
    <property type="entry name" value="A43481"/>
</dbReference>
<dbReference type="RefSeq" id="NP_001286836.1">
    <property type="nucleotide sequence ID" value="NM_001299907.1"/>
</dbReference>
<dbReference type="RefSeq" id="NP_523843.1">
    <property type="nucleotide sequence ID" value="NM_079119.3"/>
</dbReference>
<dbReference type="SMR" id="Q02637"/>
<dbReference type="BioGRID" id="63463">
    <property type="interactions" value="25"/>
</dbReference>
<dbReference type="FunCoup" id="Q02637">
    <property type="interactions" value="103"/>
</dbReference>
<dbReference type="IntAct" id="Q02637">
    <property type="interactions" value="7"/>
</dbReference>
<dbReference type="STRING" id="7227.FBpp0072179"/>
<dbReference type="PaxDb" id="7227-FBpp0072179"/>
<dbReference type="DNASU" id="37889"/>
<dbReference type="EnsemblMetazoa" id="FBtr0072272">
    <property type="protein sequence ID" value="FBpp0072179"/>
    <property type="gene ID" value="FBgn0005638"/>
</dbReference>
<dbReference type="EnsemblMetazoa" id="FBtr0339359">
    <property type="protein sequence ID" value="FBpp0308452"/>
    <property type="gene ID" value="FBgn0005638"/>
</dbReference>
<dbReference type="GeneID" id="37889"/>
<dbReference type="KEGG" id="dme:Dmel_CG4354"/>
<dbReference type="AGR" id="FB:FBgn0005638"/>
<dbReference type="CTD" id="37889"/>
<dbReference type="FlyBase" id="FBgn0005638">
    <property type="gene designation" value="slbo"/>
</dbReference>
<dbReference type="VEuPathDB" id="VectorBase:FBgn0005638"/>
<dbReference type="eggNOG" id="KOG3119">
    <property type="taxonomic scope" value="Eukaryota"/>
</dbReference>
<dbReference type="GeneTree" id="ENSGT00940000171291"/>
<dbReference type="HOGENOM" id="CLU_043327_3_1_1"/>
<dbReference type="InParanoid" id="Q02637"/>
<dbReference type="OMA" id="MPQAVHS"/>
<dbReference type="OrthoDB" id="10032067at2759"/>
<dbReference type="PhylomeDB" id="Q02637"/>
<dbReference type="Reactome" id="R-DME-2559582">
    <property type="pathway name" value="Senescence-Associated Secretory Phenotype (SASP)"/>
</dbReference>
<dbReference type="Reactome" id="R-DME-9616222">
    <property type="pathway name" value="Transcriptional regulation of granulopoiesis"/>
</dbReference>
<dbReference type="SignaLink" id="Q02637"/>
<dbReference type="BioGRID-ORCS" id="37889">
    <property type="hits" value="0 hits in 3 CRISPR screens"/>
</dbReference>
<dbReference type="GenomeRNAi" id="37889"/>
<dbReference type="PRO" id="PR:Q02637"/>
<dbReference type="Proteomes" id="UP000000803">
    <property type="component" value="Chromosome 2R"/>
</dbReference>
<dbReference type="Bgee" id="FBgn0005638">
    <property type="expression patterns" value="Expressed in indirect flight muscle cell (Drosophila) in body wall and 19 other cell types or tissues"/>
</dbReference>
<dbReference type="ExpressionAtlas" id="Q02637">
    <property type="expression patterns" value="baseline and differential"/>
</dbReference>
<dbReference type="GO" id="GO:0005634">
    <property type="term" value="C:nucleus"/>
    <property type="evidence" value="ECO:0000314"/>
    <property type="project" value="FlyBase"/>
</dbReference>
<dbReference type="GO" id="GO:0000981">
    <property type="term" value="F:DNA-binding transcription factor activity, RNA polymerase II-specific"/>
    <property type="evidence" value="ECO:0000318"/>
    <property type="project" value="GO_Central"/>
</dbReference>
<dbReference type="GO" id="GO:0000978">
    <property type="term" value="F:RNA polymerase II cis-regulatory region sequence-specific DNA binding"/>
    <property type="evidence" value="ECO:0000318"/>
    <property type="project" value="GO_Central"/>
</dbReference>
<dbReference type="GO" id="GO:0000977">
    <property type="term" value="F:RNA polymerase II transcription regulatory region sequence-specific DNA binding"/>
    <property type="evidence" value="ECO:0000314"/>
    <property type="project" value="FlyBase"/>
</dbReference>
<dbReference type="GO" id="GO:0007298">
    <property type="term" value="P:border follicle cell migration"/>
    <property type="evidence" value="ECO:0000315"/>
    <property type="project" value="FlyBase"/>
</dbReference>
<dbReference type="GO" id="GO:0006351">
    <property type="term" value="P:DNA-templated transcription"/>
    <property type="evidence" value="ECO:0007669"/>
    <property type="project" value="InterPro"/>
</dbReference>
<dbReference type="GO" id="GO:1903688">
    <property type="term" value="P:positive regulation of border follicle cell migration"/>
    <property type="evidence" value="ECO:0000315"/>
    <property type="project" value="FlyBase"/>
</dbReference>
<dbReference type="GO" id="GO:0045944">
    <property type="term" value="P:positive regulation of transcription by RNA polymerase II"/>
    <property type="evidence" value="ECO:0000315"/>
    <property type="project" value="FlyBase"/>
</dbReference>
<dbReference type="GO" id="GO:0006357">
    <property type="term" value="P:regulation of transcription by RNA polymerase II"/>
    <property type="evidence" value="ECO:0000318"/>
    <property type="project" value="GO_Central"/>
</dbReference>
<dbReference type="CDD" id="cd14693">
    <property type="entry name" value="bZIP_CEBP"/>
    <property type="match status" value="1"/>
</dbReference>
<dbReference type="Gene3D" id="1.20.5.170">
    <property type="match status" value="1"/>
</dbReference>
<dbReference type="InterPro" id="IPR004827">
    <property type="entry name" value="bZIP"/>
</dbReference>
<dbReference type="InterPro" id="IPR046347">
    <property type="entry name" value="bZIP_sf"/>
</dbReference>
<dbReference type="InterPro" id="IPR031106">
    <property type="entry name" value="C/EBP"/>
</dbReference>
<dbReference type="PANTHER" id="PTHR23334">
    <property type="entry name" value="CCAAT/ENHANCER BINDING PROTEIN"/>
    <property type="match status" value="1"/>
</dbReference>
<dbReference type="PANTHER" id="PTHR23334:SF69">
    <property type="entry name" value="CCAAT_ENHANCER-BINDING PROTEIN GAMMA"/>
    <property type="match status" value="1"/>
</dbReference>
<dbReference type="Pfam" id="PF07716">
    <property type="entry name" value="bZIP_2"/>
    <property type="match status" value="1"/>
</dbReference>
<dbReference type="SMART" id="SM00338">
    <property type="entry name" value="BRLZ"/>
    <property type="match status" value="1"/>
</dbReference>
<dbReference type="SUPFAM" id="SSF57959">
    <property type="entry name" value="Leucine zipper domain"/>
    <property type="match status" value="1"/>
</dbReference>
<dbReference type="PROSITE" id="PS50217">
    <property type="entry name" value="BZIP"/>
    <property type="match status" value="1"/>
</dbReference>
<keyword id="KW-0010">Activator</keyword>
<keyword id="KW-0238">DNA-binding</keyword>
<keyword id="KW-0539">Nucleus</keyword>
<keyword id="KW-1185">Reference proteome</keyword>
<keyword id="KW-0804">Transcription</keyword>
<keyword id="KW-0805">Transcription regulation</keyword>
<keyword id="KW-0832">Ubl conjugation</keyword>
<organism>
    <name type="scientific">Drosophila melanogaster</name>
    <name type="common">Fruit fly</name>
    <dbReference type="NCBI Taxonomy" id="7227"/>
    <lineage>
        <taxon>Eukaryota</taxon>
        <taxon>Metazoa</taxon>
        <taxon>Ecdysozoa</taxon>
        <taxon>Arthropoda</taxon>
        <taxon>Hexapoda</taxon>
        <taxon>Insecta</taxon>
        <taxon>Pterygota</taxon>
        <taxon>Neoptera</taxon>
        <taxon>Endopterygota</taxon>
        <taxon>Diptera</taxon>
        <taxon>Brachycera</taxon>
        <taxon>Muscomorpha</taxon>
        <taxon>Ephydroidea</taxon>
        <taxon>Drosophilidae</taxon>
        <taxon>Drosophila</taxon>
        <taxon>Sophophora</taxon>
    </lineage>
</organism>
<protein>
    <recommendedName>
        <fullName>CCAAT/enhancer-binding protein</fullName>
        <shortName>C/EBP</shortName>
    </recommendedName>
    <alternativeName>
        <fullName>Slow border cell protein</fullName>
    </alternativeName>
</protein>
<evidence type="ECO:0000255" key="1">
    <source>
        <dbReference type="PROSITE-ProRule" id="PRU00978"/>
    </source>
</evidence>
<evidence type="ECO:0000256" key="2">
    <source>
        <dbReference type="SAM" id="MobiDB-lite"/>
    </source>
</evidence>
<evidence type="ECO:0000269" key="3">
    <source>
    </source>
</evidence>
<evidence type="ECO:0000269" key="4">
    <source>
    </source>
</evidence>
<evidence type="ECO:0000269" key="5">
    <source>
    </source>
</evidence>
<evidence type="ECO:0000305" key="6"/>
<accession>Q02637</accession>
<accession>Q9W183</accession>
<feature type="chain" id="PRO_0000076631" description="CCAAT/enhancer-binding protein">
    <location>
        <begin position="1"/>
        <end position="449"/>
    </location>
</feature>
<feature type="domain" description="bZIP" evidence="1">
    <location>
        <begin position="363"/>
        <end position="426"/>
    </location>
</feature>
<feature type="region of interest" description="Disordered" evidence="2">
    <location>
        <begin position="211"/>
        <end position="233"/>
    </location>
</feature>
<feature type="region of interest" description="Disordered" evidence="2">
    <location>
        <begin position="276"/>
        <end position="302"/>
    </location>
</feature>
<feature type="region of interest" description="Disordered" evidence="2">
    <location>
        <begin position="334"/>
        <end position="386"/>
    </location>
</feature>
<feature type="region of interest" description="Basic motif" evidence="1">
    <location>
        <begin position="367"/>
        <end position="396"/>
    </location>
</feature>
<feature type="region of interest" description="Leucine-zipper" evidence="1">
    <location>
        <begin position="398"/>
        <end position="405"/>
    </location>
</feature>
<feature type="compositionally biased region" description="Low complexity" evidence="2">
    <location>
        <begin position="215"/>
        <end position="229"/>
    </location>
</feature>
<feature type="compositionally biased region" description="Low complexity" evidence="2">
    <location>
        <begin position="280"/>
        <end position="301"/>
    </location>
</feature>
<feature type="compositionally biased region" description="Low complexity" evidence="2">
    <location>
        <begin position="339"/>
        <end position="349"/>
    </location>
</feature>
<feature type="compositionally biased region" description="Basic and acidic residues" evidence="2">
    <location>
        <begin position="357"/>
        <end position="368"/>
    </location>
</feature>
<feature type="sequence conflict" description="In Ref. 1; AAA28415." evidence="6" ref="1">
    <location>
        <begin position="45"/>
        <end position="48"/>
    </location>
</feature>
<feature type="sequence conflict" description="In Ref. 1; AAA28415." evidence="6" ref="1">
    <original>PPSGMVSAA</original>
    <variation>RRANGLGG</variation>
    <location>
        <begin position="167"/>
        <end position="175"/>
    </location>
</feature>
<gene>
    <name type="primary">slbo</name>
    <name type="ORF">CG4354</name>
</gene>
<proteinExistence type="evidence at protein level"/>
<sequence>MLNMESPQMYADAVQTLAQLDLKKEPPLQQATIGQITLTAMSTAQQQQQQQQQQQQQQQQQQQQQQQQPQQQTTDANNNTSQDAALLVKQHAMHQMQQVAALGSNNNLLQKQMLQQYSTQTDLDELTTQEITLDLQHLIDDQFRDTETLGIFSDMVTSPGGLSATLPPSGMVSAAAKVLQQQTLRNQHGYGGRGGGGGAGGALAYMPQPVHATYNNSSDENSSVGSDSSTIKEEPIDPEYRRHLQEAASQQAAFMGNGAGLYNGYGSGANGLTGGGNPLNGGNTTPSSNGSNGSTGSSNGSQFTNLTTANVLAHHNLPHLAAAAGAHNLLKQHSKLHAQQQHQQHQQQQQHRKHSNKHVDKGTDEYRRRRERNNIAVRKSREKAKVRSREVEERVKSLLKEKDALIRQLGEMTNELQLHKQIYMQLMNHANPEVSRVCRSFLNTNEHSL</sequence>